<sequence length="340" mass="35702">MKMTLKELGEMLGARVQGNELLTISSVGTLESAQTDQLSFLANSKYRSQLESTQAGAVLLSEKEANNFQGNALIVKDPYVAFARVAQRLDTTPKAAVGIHPSAQIDASAQIGQGAAIGANAVIGAGVIIGEHCQIGPGCVIGEHSILGSNTRLWANVTLYHDVHLGQNCIIHSGAVLGSDGFGYANERGTWVKIPQTGGVRIGDNVEIGANTAVDRGALGHTEIGDGVILDNQVQIAHNAIIGKHTAIAGGSIIAGSTKLGQYCIVGGNSAIAGHLKIADGVHVSGGTNVTSEIREPGTYSSATVAVENKLWRRNTVRFRQLDDLFNRVKLLEKQQKTQD</sequence>
<keyword id="KW-0012">Acyltransferase</keyword>
<keyword id="KW-0441">Lipid A biosynthesis</keyword>
<keyword id="KW-0444">Lipid biosynthesis</keyword>
<keyword id="KW-0443">Lipid metabolism</keyword>
<keyword id="KW-1185">Reference proteome</keyword>
<keyword id="KW-0677">Repeat</keyword>
<keyword id="KW-0808">Transferase</keyword>
<evidence type="ECO:0000255" key="1">
    <source>
        <dbReference type="HAMAP-Rule" id="MF_00523"/>
    </source>
</evidence>
<gene>
    <name evidence="1" type="primary">lpxD</name>
    <name type="ordered locus">Sden_1564</name>
</gene>
<proteinExistence type="inferred from homology"/>
<organism>
    <name type="scientific">Shewanella denitrificans (strain OS217 / ATCC BAA-1090 / DSM 15013)</name>
    <dbReference type="NCBI Taxonomy" id="318161"/>
    <lineage>
        <taxon>Bacteria</taxon>
        <taxon>Pseudomonadati</taxon>
        <taxon>Pseudomonadota</taxon>
        <taxon>Gammaproteobacteria</taxon>
        <taxon>Alteromonadales</taxon>
        <taxon>Shewanellaceae</taxon>
        <taxon>Shewanella</taxon>
    </lineage>
</organism>
<comment type="function">
    <text evidence="1">Catalyzes the N-acylation of UDP-3-O-acylglucosamine using 3-hydroxyacyl-ACP as the acyl donor. Is involved in the biosynthesis of lipid A, a phosphorylated glycolipid that anchors the lipopolysaccharide to the outer membrane of the cell.</text>
</comment>
<comment type="catalytic activity">
    <reaction evidence="1">
        <text>a UDP-3-O-[(3R)-3-hydroxyacyl]-alpha-D-glucosamine + a (3R)-hydroxyacyl-[ACP] = a UDP-2-N,3-O-bis[(3R)-3-hydroxyacyl]-alpha-D-glucosamine + holo-[ACP] + H(+)</text>
        <dbReference type="Rhea" id="RHEA:53836"/>
        <dbReference type="Rhea" id="RHEA-COMP:9685"/>
        <dbReference type="Rhea" id="RHEA-COMP:9945"/>
        <dbReference type="ChEBI" id="CHEBI:15378"/>
        <dbReference type="ChEBI" id="CHEBI:64479"/>
        <dbReference type="ChEBI" id="CHEBI:78827"/>
        <dbReference type="ChEBI" id="CHEBI:137740"/>
        <dbReference type="ChEBI" id="CHEBI:137748"/>
        <dbReference type="EC" id="2.3.1.191"/>
    </reaction>
</comment>
<comment type="pathway">
    <text evidence="1">Bacterial outer membrane biogenesis; LPS lipid A biosynthesis.</text>
</comment>
<comment type="subunit">
    <text evidence="1">Homotrimer.</text>
</comment>
<comment type="similarity">
    <text evidence="1">Belongs to the transferase hexapeptide repeat family. LpxD subfamily.</text>
</comment>
<accession>Q12NX7</accession>
<name>LPXD_SHEDO</name>
<reference key="1">
    <citation type="submission" date="2006-03" db="EMBL/GenBank/DDBJ databases">
        <title>Complete sequence of Shewanella denitrificans OS217.</title>
        <authorList>
            <consortium name="US DOE Joint Genome Institute"/>
            <person name="Copeland A."/>
            <person name="Lucas S."/>
            <person name="Lapidus A."/>
            <person name="Barry K."/>
            <person name="Detter J.C."/>
            <person name="Glavina del Rio T."/>
            <person name="Hammon N."/>
            <person name="Israni S."/>
            <person name="Dalin E."/>
            <person name="Tice H."/>
            <person name="Pitluck S."/>
            <person name="Brettin T."/>
            <person name="Bruce D."/>
            <person name="Han C."/>
            <person name="Tapia R."/>
            <person name="Gilna P."/>
            <person name="Kiss H."/>
            <person name="Schmutz J."/>
            <person name="Larimer F."/>
            <person name="Land M."/>
            <person name="Hauser L."/>
            <person name="Kyrpides N."/>
            <person name="Lykidis A."/>
            <person name="Richardson P."/>
        </authorList>
    </citation>
    <scope>NUCLEOTIDE SEQUENCE [LARGE SCALE GENOMIC DNA]</scope>
    <source>
        <strain>OS217 / ATCC BAA-1090 / DSM 15013</strain>
    </source>
</reference>
<dbReference type="EC" id="2.3.1.191" evidence="1"/>
<dbReference type="EMBL" id="CP000302">
    <property type="protein sequence ID" value="ABE54849.1"/>
    <property type="molecule type" value="Genomic_DNA"/>
</dbReference>
<dbReference type="RefSeq" id="WP_011496007.1">
    <property type="nucleotide sequence ID" value="NC_007954.1"/>
</dbReference>
<dbReference type="SMR" id="Q12NX7"/>
<dbReference type="STRING" id="318161.Sden_1564"/>
<dbReference type="KEGG" id="sdn:Sden_1564"/>
<dbReference type="eggNOG" id="COG1044">
    <property type="taxonomic scope" value="Bacteria"/>
</dbReference>
<dbReference type="HOGENOM" id="CLU_049865_0_0_6"/>
<dbReference type="OrthoDB" id="9784739at2"/>
<dbReference type="UniPathway" id="UPA00973"/>
<dbReference type="Proteomes" id="UP000001982">
    <property type="component" value="Chromosome"/>
</dbReference>
<dbReference type="GO" id="GO:0016020">
    <property type="term" value="C:membrane"/>
    <property type="evidence" value="ECO:0007669"/>
    <property type="project" value="GOC"/>
</dbReference>
<dbReference type="GO" id="GO:0016410">
    <property type="term" value="F:N-acyltransferase activity"/>
    <property type="evidence" value="ECO:0007669"/>
    <property type="project" value="InterPro"/>
</dbReference>
<dbReference type="GO" id="GO:0009245">
    <property type="term" value="P:lipid A biosynthetic process"/>
    <property type="evidence" value="ECO:0007669"/>
    <property type="project" value="UniProtKB-UniRule"/>
</dbReference>
<dbReference type="CDD" id="cd03352">
    <property type="entry name" value="LbH_LpxD"/>
    <property type="match status" value="1"/>
</dbReference>
<dbReference type="Gene3D" id="1.20.5.170">
    <property type="match status" value="1"/>
</dbReference>
<dbReference type="Gene3D" id="2.160.10.10">
    <property type="entry name" value="Hexapeptide repeat proteins"/>
    <property type="match status" value="1"/>
</dbReference>
<dbReference type="Gene3D" id="3.40.1390.10">
    <property type="entry name" value="MurE/MurF, N-terminal domain"/>
    <property type="match status" value="1"/>
</dbReference>
<dbReference type="HAMAP" id="MF_00523">
    <property type="entry name" value="LpxD"/>
    <property type="match status" value="1"/>
</dbReference>
<dbReference type="InterPro" id="IPR001451">
    <property type="entry name" value="Hexapep"/>
</dbReference>
<dbReference type="InterPro" id="IPR007691">
    <property type="entry name" value="LpxD"/>
</dbReference>
<dbReference type="InterPro" id="IPR011004">
    <property type="entry name" value="Trimer_LpxA-like_sf"/>
</dbReference>
<dbReference type="InterPro" id="IPR020573">
    <property type="entry name" value="UDP_GlcNAc_AcTrfase_non-rep"/>
</dbReference>
<dbReference type="NCBIfam" id="TIGR01853">
    <property type="entry name" value="lipid_A_lpxD"/>
    <property type="match status" value="1"/>
</dbReference>
<dbReference type="NCBIfam" id="NF002060">
    <property type="entry name" value="PRK00892.1"/>
    <property type="match status" value="1"/>
</dbReference>
<dbReference type="PANTHER" id="PTHR43378">
    <property type="entry name" value="UDP-3-O-ACYLGLUCOSAMINE N-ACYLTRANSFERASE"/>
    <property type="match status" value="1"/>
</dbReference>
<dbReference type="PANTHER" id="PTHR43378:SF2">
    <property type="entry name" value="UDP-3-O-ACYLGLUCOSAMINE N-ACYLTRANSFERASE 1, MITOCHONDRIAL-RELATED"/>
    <property type="match status" value="1"/>
</dbReference>
<dbReference type="Pfam" id="PF00132">
    <property type="entry name" value="Hexapep"/>
    <property type="match status" value="3"/>
</dbReference>
<dbReference type="Pfam" id="PF04613">
    <property type="entry name" value="LpxD"/>
    <property type="match status" value="1"/>
</dbReference>
<dbReference type="SUPFAM" id="SSF51161">
    <property type="entry name" value="Trimeric LpxA-like enzymes"/>
    <property type="match status" value="1"/>
</dbReference>
<feature type="chain" id="PRO_0000264434" description="UDP-3-O-acylglucosamine N-acyltransferase">
    <location>
        <begin position="1"/>
        <end position="340"/>
    </location>
</feature>
<feature type="active site" description="Proton acceptor" evidence="1">
    <location>
        <position position="238"/>
    </location>
</feature>
<protein>
    <recommendedName>
        <fullName evidence="1">UDP-3-O-acylglucosamine N-acyltransferase</fullName>
        <ecNumber evidence="1">2.3.1.191</ecNumber>
    </recommendedName>
</protein>